<dbReference type="EC" id="2.5.1.78" evidence="1"/>
<dbReference type="EMBL" id="AP008934">
    <property type="protein sequence ID" value="BAE18143.1"/>
    <property type="molecule type" value="Genomic_DNA"/>
</dbReference>
<dbReference type="SMR" id="Q49YJ6"/>
<dbReference type="GeneID" id="3615868"/>
<dbReference type="KEGG" id="ssp:SSP0998"/>
<dbReference type="PATRIC" id="fig|342451.11.peg.997"/>
<dbReference type="eggNOG" id="COG0054">
    <property type="taxonomic scope" value="Bacteria"/>
</dbReference>
<dbReference type="HOGENOM" id="CLU_089358_1_1_9"/>
<dbReference type="OrthoDB" id="9809709at2"/>
<dbReference type="UniPathway" id="UPA00275">
    <property type="reaction ID" value="UER00404"/>
</dbReference>
<dbReference type="Proteomes" id="UP000006371">
    <property type="component" value="Chromosome"/>
</dbReference>
<dbReference type="GO" id="GO:0005829">
    <property type="term" value="C:cytosol"/>
    <property type="evidence" value="ECO:0007669"/>
    <property type="project" value="TreeGrafter"/>
</dbReference>
<dbReference type="GO" id="GO:0009349">
    <property type="term" value="C:riboflavin synthase complex"/>
    <property type="evidence" value="ECO:0007669"/>
    <property type="project" value="InterPro"/>
</dbReference>
<dbReference type="GO" id="GO:0000906">
    <property type="term" value="F:6,7-dimethyl-8-ribityllumazine synthase activity"/>
    <property type="evidence" value="ECO:0007669"/>
    <property type="project" value="UniProtKB-UniRule"/>
</dbReference>
<dbReference type="GO" id="GO:0009231">
    <property type="term" value="P:riboflavin biosynthetic process"/>
    <property type="evidence" value="ECO:0007669"/>
    <property type="project" value="UniProtKB-UniRule"/>
</dbReference>
<dbReference type="CDD" id="cd09209">
    <property type="entry name" value="Lumazine_synthase-I"/>
    <property type="match status" value="1"/>
</dbReference>
<dbReference type="FunFam" id="3.40.50.960:FF:000001">
    <property type="entry name" value="6,7-dimethyl-8-ribityllumazine synthase"/>
    <property type="match status" value="1"/>
</dbReference>
<dbReference type="Gene3D" id="3.40.50.960">
    <property type="entry name" value="Lumazine/riboflavin synthase"/>
    <property type="match status" value="1"/>
</dbReference>
<dbReference type="HAMAP" id="MF_00178">
    <property type="entry name" value="Lumazine_synth"/>
    <property type="match status" value="1"/>
</dbReference>
<dbReference type="InterPro" id="IPR034964">
    <property type="entry name" value="LS"/>
</dbReference>
<dbReference type="InterPro" id="IPR002180">
    <property type="entry name" value="LS/RS"/>
</dbReference>
<dbReference type="InterPro" id="IPR036467">
    <property type="entry name" value="LS/RS_sf"/>
</dbReference>
<dbReference type="NCBIfam" id="TIGR00114">
    <property type="entry name" value="lumazine-synth"/>
    <property type="match status" value="1"/>
</dbReference>
<dbReference type="NCBIfam" id="NF000812">
    <property type="entry name" value="PRK00061.1-4"/>
    <property type="match status" value="1"/>
</dbReference>
<dbReference type="PANTHER" id="PTHR21058:SF0">
    <property type="entry name" value="6,7-DIMETHYL-8-RIBITYLLUMAZINE SYNTHASE"/>
    <property type="match status" value="1"/>
</dbReference>
<dbReference type="PANTHER" id="PTHR21058">
    <property type="entry name" value="6,7-DIMETHYL-8-RIBITYLLUMAZINE SYNTHASE DMRL SYNTHASE LUMAZINE SYNTHASE"/>
    <property type="match status" value="1"/>
</dbReference>
<dbReference type="Pfam" id="PF00885">
    <property type="entry name" value="DMRL_synthase"/>
    <property type="match status" value="1"/>
</dbReference>
<dbReference type="SUPFAM" id="SSF52121">
    <property type="entry name" value="Lumazine synthase"/>
    <property type="match status" value="1"/>
</dbReference>
<protein>
    <recommendedName>
        <fullName evidence="1">6,7-dimethyl-8-ribityllumazine synthase</fullName>
        <shortName evidence="1">DMRL synthase</shortName>
        <shortName evidence="1">LS</shortName>
        <shortName evidence="1">Lumazine synthase</shortName>
        <ecNumber evidence="1">2.5.1.78</ecNumber>
    </recommendedName>
</protein>
<keyword id="KW-1185">Reference proteome</keyword>
<keyword id="KW-0686">Riboflavin biosynthesis</keyword>
<keyword id="KW-0808">Transferase</keyword>
<name>RISB_STAS1</name>
<evidence type="ECO:0000255" key="1">
    <source>
        <dbReference type="HAMAP-Rule" id="MF_00178"/>
    </source>
</evidence>
<gene>
    <name evidence="1" type="primary">ribH</name>
    <name type="ordered locus">SSP0998</name>
</gene>
<organism>
    <name type="scientific">Staphylococcus saprophyticus subsp. saprophyticus (strain ATCC 15305 / DSM 20229 / NCIMB 8711 / NCTC 7292 / S-41)</name>
    <dbReference type="NCBI Taxonomy" id="342451"/>
    <lineage>
        <taxon>Bacteria</taxon>
        <taxon>Bacillati</taxon>
        <taxon>Bacillota</taxon>
        <taxon>Bacilli</taxon>
        <taxon>Bacillales</taxon>
        <taxon>Staphylococcaceae</taxon>
        <taxon>Staphylococcus</taxon>
    </lineage>
</organism>
<reference key="1">
    <citation type="journal article" date="2005" name="Proc. Natl. Acad. Sci. U.S.A.">
        <title>Whole genome sequence of Staphylococcus saprophyticus reveals the pathogenesis of uncomplicated urinary tract infection.</title>
        <authorList>
            <person name="Kuroda M."/>
            <person name="Yamashita A."/>
            <person name="Hirakawa H."/>
            <person name="Kumano M."/>
            <person name="Morikawa K."/>
            <person name="Higashide M."/>
            <person name="Maruyama A."/>
            <person name="Inose Y."/>
            <person name="Matoba K."/>
            <person name="Toh H."/>
            <person name="Kuhara S."/>
            <person name="Hattori M."/>
            <person name="Ohta T."/>
        </authorList>
    </citation>
    <scope>NUCLEOTIDE SEQUENCE [LARGE SCALE GENOMIC DNA]</scope>
    <source>
        <strain>ATCC 15305 / DSM 20229 / NCIMB 8711 / NCTC 7292 / S-41</strain>
    </source>
</reference>
<accession>Q49YJ6</accession>
<sequence>MNFEGKLVGSDLKVAIVVSRFNDFITNRLLDGAKDTLIRHEVPEANIDVAYVPGAFEIPLVAKKLAKKNDYDAVITLGCVIRGSTSHYDYVCNEVAKGVSKANDVTDTPVIFGILTTENIEQAVERAGTKAGNKGAEAAVSAIEMANLLREI</sequence>
<comment type="function">
    <text evidence="1">Catalyzes the formation of 6,7-dimethyl-8-ribityllumazine by condensation of 5-amino-6-(D-ribitylamino)uracil with 3,4-dihydroxy-2-butanone 4-phosphate. This is the penultimate step in the biosynthesis of riboflavin.</text>
</comment>
<comment type="catalytic activity">
    <reaction evidence="1">
        <text>(2S)-2-hydroxy-3-oxobutyl phosphate + 5-amino-6-(D-ribitylamino)uracil = 6,7-dimethyl-8-(1-D-ribityl)lumazine + phosphate + 2 H2O + H(+)</text>
        <dbReference type="Rhea" id="RHEA:26152"/>
        <dbReference type="ChEBI" id="CHEBI:15377"/>
        <dbReference type="ChEBI" id="CHEBI:15378"/>
        <dbReference type="ChEBI" id="CHEBI:15934"/>
        <dbReference type="ChEBI" id="CHEBI:43474"/>
        <dbReference type="ChEBI" id="CHEBI:58201"/>
        <dbReference type="ChEBI" id="CHEBI:58830"/>
        <dbReference type="EC" id="2.5.1.78"/>
    </reaction>
</comment>
<comment type="pathway">
    <text evidence="1">Cofactor biosynthesis; riboflavin biosynthesis; riboflavin from 2-hydroxy-3-oxobutyl phosphate and 5-amino-6-(D-ribitylamino)uracil: step 1/2.</text>
</comment>
<comment type="subunit">
    <text evidence="1">Forms an icosahedral capsid composed of 60 subunits, arranged as a dodecamer of pentamers.</text>
</comment>
<comment type="similarity">
    <text evidence="1">Belongs to the DMRL synthase family.</text>
</comment>
<feature type="chain" id="PRO_1000040526" description="6,7-dimethyl-8-ribityllumazine synthase">
    <location>
        <begin position="1"/>
        <end position="152"/>
    </location>
</feature>
<feature type="active site" description="Proton donor" evidence="1">
    <location>
        <position position="87"/>
    </location>
</feature>
<feature type="binding site" evidence="1">
    <location>
        <position position="21"/>
    </location>
    <ligand>
        <name>5-amino-6-(D-ribitylamino)uracil</name>
        <dbReference type="ChEBI" id="CHEBI:15934"/>
    </ligand>
</feature>
<feature type="binding site" evidence="1">
    <location>
        <begin position="55"/>
        <end position="57"/>
    </location>
    <ligand>
        <name>5-amino-6-(D-ribitylamino)uracil</name>
        <dbReference type="ChEBI" id="CHEBI:15934"/>
    </ligand>
</feature>
<feature type="binding site" evidence="1">
    <location>
        <begin position="79"/>
        <end position="81"/>
    </location>
    <ligand>
        <name>5-amino-6-(D-ribitylamino)uracil</name>
        <dbReference type="ChEBI" id="CHEBI:15934"/>
    </ligand>
</feature>
<feature type="binding site" evidence="1">
    <location>
        <begin position="84"/>
        <end position="85"/>
    </location>
    <ligand>
        <name>(2S)-2-hydroxy-3-oxobutyl phosphate</name>
        <dbReference type="ChEBI" id="CHEBI:58830"/>
    </ligand>
</feature>
<feature type="binding site" evidence="1">
    <location>
        <position position="112"/>
    </location>
    <ligand>
        <name>5-amino-6-(D-ribitylamino)uracil</name>
        <dbReference type="ChEBI" id="CHEBI:15934"/>
    </ligand>
</feature>
<feature type="binding site" evidence="1">
    <location>
        <position position="126"/>
    </location>
    <ligand>
        <name>(2S)-2-hydroxy-3-oxobutyl phosphate</name>
        <dbReference type="ChEBI" id="CHEBI:58830"/>
    </ligand>
</feature>
<proteinExistence type="inferred from homology"/>